<name>PANCY_SYNR3</name>
<reference key="1">
    <citation type="submission" date="2006-05" db="EMBL/GenBank/DDBJ databases">
        <authorList>
            <consortium name="Genoscope"/>
        </authorList>
    </citation>
    <scope>NUCLEOTIDE SEQUENCE [LARGE SCALE GENOMIC DNA]</scope>
    <source>
        <strain>RCC307</strain>
    </source>
</reference>
<dbReference type="EC" id="6.3.2.1" evidence="1"/>
<dbReference type="EC" id="2.7.4.25" evidence="1"/>
<dbReference type="EMBL" id="CT978603">
    <property type="protein sequence ID" value="CAK28972.1"/>
    <property type="molecule type" value="Genomic_DNA"/>
</dbReference>
<dbReference type="SMR" id="A5GVR3"/>
<dbReference type="STRING" id="316278.SynRCC307_2069"/>
<dbReference type="KEGG" id="syr:SynRCC307_2069"/>
<dbReference type="eggNOG" id="COG0283">
    <property type="taxonomic scope" value="Bacteria"/>
</dbReference>
<dbReference type="eggNOG" id="COG0414">
    <property type="taxonomic scope" value="Bacteria"/>
</dbReference>
<dbReference type="HOGENOM" id="CLU_037427_0_0_3"/>
<dbReference type="OrthoDB" id="9773087at2"/>
<dbReference type="UniPathway" id="UPA00028">
    <property type="reaction ID" value="UER00005"/>
</dbReference>
<dbReference type="Proteomes" id="UP000001115">
    <property type="component" value="Chromosome"/>
</dbReference>
<dbReference type="GO" id="GO:0005829">
    <property type="term" value="C:cytosol"/>
    <property type="evidence" value="ECO:0007669"/>
    <property type="project" value="TreeGrafter"/>
</dbReference>
<dbReference type="GO" id="GO:0005524">
    <property type="term" value="F:ATP binding"/>
    <property type="evidence" value="ECO:0007669"/>
    <property type="project" value="UniProtKB-UniRule"/>
</dbReference>
<dbReference type="GO" id="GO:0036430">
    <property type="term" value="F:CMP kinase activity"/>
    <property type="evidence" value="ECO:0007669"/>
    <property type="project" value="RHEA"/>
</dbReference>
<dbReference type="GO" id="GO:0036431">
    <property type="term" value="F:dCMP kinase activity"/>
    <property type="evidence" value="ECO:0007669"/>
    <property type="project" value="RHEA"/>
</dbReference>
<dbReference type="GO" id="GO:0004592">
    <property type="term" value="F:pantoate-beta-alanine ligase activity"/>
    <property type="evidence" value="ECO:0007669"/>
    <property type="project" value="UniProtKB-UniRule"/>
</dbReference>
<dbReference type="GO" id="GO:0015949">
    <property type="term" value="P:nucleobase-containing small molecule interconversion"/>
    <property type="evidence" value="ECO:0007669"/>
    <property type="project" value="TreeGrafter"/>
</dbReference>
<dbReference type="GO" id="GO:0015940">
    <property type="term" value="P:pantothenate biosynthetic process"/>
    <property type="evidence" value="ECO:0007669"/>
    <property type="project" value="UniProtKB-UniRule"/>
</dbReference>
<dbReference type="GO" id="GO:0006220">
    <property type="term" value="P:pyrimidine nucleotide metabolic process"/>
    <property type="evidence" value="ECO:0007669"/>
    <property type="project" value="UniProtKB-UniRule"/>
</dbReference>
<dbReference type="CDD" id="cd02020">
    <property type="entry name" value="CMPK"/>
    <property type="match status" value="1"/>
</dbReference>
<dbReference type="CDD" id="cd00560">
    <property type="entry name" value="PanC"/>
    <property type="match status" value="1"/>
</dbReference>
<dbReference type="Gene3D" id="3.40.50.620">
    <property type="entry name" value="HUPs"/>
    <property type="match status" value="1"/>
</dbReference>
<dbReference type="Gene3D" id="3.40.50.300">
    <property type="entry name" value="P-loop containing nucleotide triphosphate hydrolases"/>
    <property type="match status" value="1"/>
</dbReference>
<dbReference type="Gene3D" id="3.30.1300.10">
    <property type="entry name" value="Pantoate-beta-alanine ligase, C-terminal domain"/>
    <property type="match status" value="1"/>
</dbReference>
<dbReference type="HAMAP" id="MF_00238">
    <property type="entry name" value="Cytidyl_kinase_type1"/>
    <property type="match status" value="1"/>
</dbReference>
<dbReference type="HAMAP" id="MF_00158">
    <property type="entry name" value="PanC"/>
    <property type="match status" value="1"/>
</dbReference>
<dbReference type="HAMAP" id="MF_01349">
    <property type="entry name" value="PanCY"/>
    <property type="match status" value="1"/>
</dbReference>
<dbReference type="InterPro" id="IPR004821">
    <property type="entry name" value="Cyt_trans-like"/>
</dbReference>
<dbReference type="InterPro" id="IPR003136">
    <property type="entry name" value="Cytidylate_kin"/>
</dbReference>
<dbReference type="InterPro" id="IPR011994">
    <property type="entry name" value="Cytidylate_kinase_dom"/>
</dbReference>
<dbReference type="InterPro" id="IPR027417">
    <property type="entry name" value="P-loop_NTPase"/>
</dbReference>
<dbReference type="InterPro" id="IPR003721">
    <property type="entry name" value="Pantoate_ligase"/>
</dbReference>
<dbReference type="InterPro" id="IPR024894">
    <property type="entry name" value="Pantoate_ligase/cytidylate_kin"/>
</dbReference>
<dbReference type="InterPro" id="IPR042176">
    <property type="entry name" value="Pantoate_ligase_C"/>
</dbReference>
<dbReference type="InterPro" id="IPR014729">
    <property type="entry name" value="Rossmann-like_a/b/a_fold"/>
</dbReference>
<dbReference type="NCBIfam" id="TIGR00017">
    <property type="entry name" value="cmk"/>
    <property type="match status" value="1"/>
</dbReference>
<dbReference type="NCBIfam" id="TIGR00125">
    <property type="entry name" value="cyt_tran_rel"/>
    <property type="match status" value="1"/>
</dbReference>
<dbReference type="NCBIfam" id="TIGR00018">
    <property type="entry name" value="panC"/>
    <property type="match status" value="1"/>
</dbReference>
<dbReference type="NCBIfam" id="NF010004">
    <property type="entry name" value="PRK13477.1"/>
    <property type="match status" value="1"/>
</dbReference>
<dbReference type="PANTHER" id="PTHR21299:SF2">
    <property type="entry name" value="CYTIDYLATE KINASE"/>
    <property type="match status" value="1"/>
</dbReference>
<dbReference type="PANTHER" id="PTHR21299">
    <property type="entry name" value="CYTIDYLATE KINASE/PANTOATE-BETA-ALANINE LIGASE"/>
    <property type="match status" value="1"/>
</dbReference>
<dbReference type="Pfam" id="PF02224">
    <property type="entry name" value="Cytidylate_kin"/>
    <property type="match status" value="1"/>
</dbReference>
<dbReference type="Pfam" id="PF02569">
    <property type="entry name" value="Pantoate_ligase"/>
    <property type="match status" value="1"/>
</dbReference>
<dbReference type="SUPFAM" id="SSF52374">
    <property type="entry name" value="Nucleotidylyl transferase"/>
    <property type="match status" value="1"/>
</dbReference>
<dbReference type="SUPFAM" id="SSF52540">
    <property type="entry name" value="P-loop containing nucleoside triphosphate hydrolases"/>
    <property type="match status" value="1"/>
</dbReference>
<protein>
    <recommendedName>
        <fullName evidence="1">Bifunctional pantoate ligase/cytidylate kinase</fullName>
    </recommendedName>
    <domain>
        <recommendedName>
            <fullName evidence="1">Pantothenate synthetase</fullName>
            <shortName evidence="1">PS</shortName>
            <ecNumber evidence="1">6.3.2.1</ecNumber>
        </recommendedName>
        <alternativeName>
            <fullName evidence="1">Pantoate--beta-alanine ligase</fullName>
        </alternativeName>
        <alternativeName>
            <fullName evidence="1">Pantoate-activating enzyme</fullName>
        </alternativeName>
    </domain>
    <domain>
        <recommendedName>
            <fullName evidence="1">Cytidylate kinase</fullName>
            <shortName evidence="1">CK</shortName>
            <ecNumber evidence="1">2.7.4.25</ecNumber>
        </recommendedName>
        <alternativeName>
            <fullName evidence="1">Cytidine monophosphate kinase</fullName>
            <shortName evidence="1">CMP kinase</shortName>
        </alternativeName>
    </domain>
</protein>
<organism>
    <name type="scientific">Synechococcus sp. (strain RCC307)</name>
    <dbReference type="NCBI Taxonomy" id="316278"/>
    <lineage>
        <taxon>Bacteria</taxon>
        <taxon>Bacillati</taxon>
        <taxon>Cyanobacteriota</taxon>
        <taxon>Cyanophyceae</taxon>
        <taxon>Synechococcales</taxon>
        <taxon>Synechococcaceae</taxon>
        <taxon>Synechococcus</taxon>
    </lineage>
</organism>
<sequence>MKLQTSADLQRWLQAGGPGPLHLVPTMGALHQGHAALIRAARQQGGRVLVSVFVNPLQFSPNEDFARYPRRLEEDHALALEAGADALWAPQPEDVFPAGAAGLTQLAPAPELVANLCGPSRPGHFEGVCTVVSRLLALVQPSHLHLGEKDWQQLQVLRRLVRDLRWPVQIVPCPTLRERDGLPLSSRNAYLSVEQRQQAALLPQALAQGQQLLDAGQRQAEPLLRAVRALMEDGGLAVDYLQLVDLPRLQELEQVTGPALLAAAVRCGEARLIDHRVLMSRLPILAIDGPAGAGKSTVTRQVAHELGLTYLDTGAMYRGVTWLLQQRGFEPQEGEPLQALLADLELRFGPASGTEQTLLVNGVDATSAIRTAEVTASVSAVAALPSVRAALTQQQQQLGQQGGLVAEGRDIGTAVFPDAELKIYLTATVAERARRRAADLAARSLPVPVLSQLEQEIADRDHKDSSREVAPLRQASDAVELLSDGLSIDEVVAQIVALFREWVPVEALNADA</sequence>
<proteinExistence type="inferred from homology"/>
<accession>A5GVR3</accession>
<gene>
    <name evidence="1" type="primary">panC/cmk</name>
    <name type="ordered locus">SynRCC307_2069</name>
</gene>
<evidence type="ECO:0000255" key="1">
    <source>
        <dbReference type="HAMAP-Rule" id="MF_01349"/>
    </source>
</evidence>
<comment type="function">
    <text evidence="1">Catalyzes the condensation of pantoate with beta-alanine in an ATP-dependent reaction via a pantoyl-adenylate intermediate.</text>
</comment>
<comment type="function">
    <text evidence="1">Catalyzes the transfer of a phosphate group from ATP to either CMP or dCMP to form CDP or dCDP and ADP, respectively.</text>
</comment>
<comment type="catalytic activity">
    <reaction evidence="1">
        <text>(R)-pantoate + beta-alanine + ATP = (R)-pantothenate + AMP + diphosphate + H(+)</text>
        <dbReference type="Rhea" id="RHEA:10912"/>
        <dbReference type="ChEBI" id="CHEBI:15378"/>
        <dbReference type="ChEBI" id="CHEBI:15980"/>
        <dbReference type="ChEBI" id="CHEBI:29032"/>
        <dbReference type="ChEBI" id="CHEBI:30616"/>
        <dbReference type="ChEBI" id="CHEBI:33019"/>
        <dbReference type="ChEBI" id="CHEBI:57966"/>
        <dbReference type="ChEBI" id="CHEBI:456215"/>
        <dbReference type="EC" id="6.3.2.1"/>
    </reaction>
</comment>
<comment type="catalytic activity">
    <reaction evidence="1">
        <text>CMP + ATP = CDP + ADP</text>
        <dbReference type="Rhea" id="RHEA:11600"/>
        <dbReference type="ChEBI" id="CHEBI:30616"/>
        <dbReference type="ChEBI" id="CHEBI:58069"/>
        <dbReference type="ChEBI" id="CHEBI:60377"/>
        <dbReference type="ChEBI" id="CHEBI:456216"/>
        <dbReference type="EC" id="2.7.4.25"/>
    </reaction>
</comment>
<comment type="catalytic activity">
    <reaction evidence="1">
        <text>dCMP + ATP = dCDP + ADP</text>
        <dbReference type="Rhea" id="RHEA:25094"/>
        <dbReference type="ChEBI" id="CHEBI:30616"/>
        <dbReference type="ChEBI" id="CHEBI:57566"/>
        <dbReference type="ChEBI" id="CHEBI:58593"/>
        <dbReference type="ChEBI" id="CHEBI:456216"/>
        <dbReference type="EC" id="2.7.4.25"/>
    </reaction>
</comment>
<comment type="pathway">
    <text evidence="1">Cofactor biosynthesis; (R)-pantothenate biosynthesis; (R)-pantothenate from (R)-pantoate and beta-alanine: step 1/1.</text>
</comment>
<comment type="subcellular location">
    <subcellularLocation>
        <location evidence="1">Cytoplasm</location>
    </subcellularLocation>
</comment>
<comment type="similarity">
    <text evidence="1">In the N-terminal section; belongs to the pantothenate synthetase family.</text>
</comment>
<comment type="similarity">
    <text evidence="1">In the C-terminal section; belongs to the cytidylate kinase family. Type 1 subfamily.</text>
</comment>
<feature type="chain" id="PRO_0000333301" description="Bifunctional pantoate ligase/cytidylate kinase">
    <location>
        <begin position="1"/>
        <end position="512"/>
    </location>
</feature>
<feature type="region of interest" description="Pantoate--beta-alanine ligase">
    <location>
        <begin position="1"/>
        <end position="276"/>
    </location>
</feature>
<feature type="region of interest" description="Cytidylate kinase" evidence="1">
    <location>
        <begin position="277"/>
        <end position="512"/>
    </location>
</feature>
<feature type="active site" description="Proton donor" evidence="1">
    <location>
        <position position="34"/>
    </location>
</feature>
<feature type="binding site" evidence="1">
    <location>
        <begin position="27"/>
        <end position="34"/>
    </location>
    <ligand>
        <name>ATP</name>
        <dbReference type="ChEBI" id="CHEBI:30616"/>
    </ligand>
</feature>
<feature type="binding site" evidence="1">
    <location>
        <position position="58"/>
    </location>
    <ligand>
        <name>(R)-pantoate</name>
        <dbReference type="ChEBI" id="CHEBI:15980"/>
    </ligand>
</feature>
<feature type="binding site" evidence="1">
    <location>
        <position position="58"/>
    </location>
    <ligand>
        <name>beta-alanine</name>
        <dbReference type="ChEBI" id="CHEBI:57966"/>
    </ligand>
</feature>
<feature type="binding site" evidence="1">
    <location>
        <begin position="147"/>
        <end position="150"/>
    </location>
    <ligand>
        <name>ATP</name>
        <dbReference type="ChEBI" id="CHEBI:30616"/>
    </ligand>
</feature>
<feature type="binding site" evidence="1">
    <location>
        <position position="153"/>
    </location>
    <ligand>
        <name>(R)-pantoate</name>
        <dbReference type="ChEBI" id="CHEBI:15980"/>
    </ligand>
</feature>
<feature type="binding site" evidence="1">
    <location>
        <position position="176"/>
    </location>
    <ligand>
        <name>ATP</name>
        <dbReference type="ChEBI" id="CHEBI:30616"/>
    </ligand>
</feature>
<feature type="binding site" evidence="1">
    <location>
        <begin position="184"/>
        <end position="187"/>
    </location>
    <ligand>
        <name>ATP</name>
        <dbReference type="ChEBI" id="CHEBI:30616"/>
    </ligand>
</feature>
<keyword id="KW-0067">ATP-binding</keyword>
<keyword id="KW-0963">Cytoplasm</keyword>
<keyword id="KW-0418">Kinase</keyword>
<keyword id="KW-0436">Ligase</keyword>
<keyword id="KW-0511">Multifunctional enzyme</keyword>
<keyword id="KW-0547">Nucleotide-binding</keyword>
<keyword id="KW-0566">Pantothenate biosynthesis</keyword>
<keyword id="KW-1185">Reference proteome</keyword>
<keyword id="KW-0808">Transferase</keyword>